<sequence length="87" mass="9913">MVDEITNETAQTVAAGQLRAFIERIERLEEEKQTISDDIKDVYAEMKGNGFDVKAVRAIVRLRKKDQAERQEEEAILDLYKAALGMV</sequence>
<reference key="1">
    <citation type="submission" date="2006-06" db="EMBL/GenBank/DDBJ databases">
        <title>Complete sequence of chromosome of Mesorhizobium sp. BNC1.</title>
        <authorList>
            <consortium name="US DOE Joint Genome Institute"/>
            <person name="Copeland A."/>
            <person name="Lucas S."/>
            <person name="Lapidus A."/>
            <person name="Barry K."/>
            <person name="Detter J.C."/>
            <person name="Glavina del Rio T."/>
            <person name="Hammon N."/>
            <person name="Israni S."/>
            <person name="Dalin E."/>
            <person name="Tice H."/>
            <person name="Pitluck S."/>
            <person name="Chertkov O."/>
            <person name="Brettin T."/>
            <person name="Bruce D."/>
            <person name="Han C."/>
            <person name="Tapia R."/>
            <person name="Gilna P."/>
            <person name="Schmutz J."/>
            <person name="Larimer F."/>
            <person name="Land M."/>
            <person name="Hauser L."/>
            <person name="Kyrpides N."/>
            <person name="Mikhailova N."/>
            <person name="Richardson P."/>
        </authorList>
    </citation>
    <scope>NUCLEOTIDE SEQUENCE [LARGE SCALE GENOMIC DNA]</scope>
    <source>
        <strain>BNC1</strain>
    </source>
</reference>
<comment type="similarity">
    <text evidence="1">Belongs to the UPF0335 family.</text>
</comment>
<name>Y3367_CHESB</name>
<gene>
    <name type="ordered locus">Meso_3367</name>
</gene>
<dbReference type="EMBL" id="CP000390">
    <property type="protein sequence ID" value="ABG64738.1"/>
    <property type="molecule type" value="Genomic_DNA"/>
</dbReference>
<dbReference type="SMR" id="Q11CY7"/>
<dbReference type="STRING" id="266779.Meso_3367"/>
<dbReference type="KEGG" id="mes:Meso_3367"/>
<dbReference type="eggNOG" id="COG3750">
    <property type="taxonomic scope" value="Bacteria"/>
</dbReference>
<dbReference type="HOGENOM" id="CLU_158651_3_0_5"/>
<dbReference type="OrthoDB" id="9813793at2"/>
<dbReference type="GO" id="GO:0003677">
    <property type="term" value="F:DNA binding"/>
    <property type="evidence" value="ECO:0007669"/>
    <property type="project" value="InterPro"/>
</dbReference>
<dbReference type="HAMAP" id="MF_00797">
    <property type="entry name" value="UPF0335"/>
    <property type="match status" value="1"/>
</dbReference>
<dbReference type="InterPro" id="IPR018753">
    <property type="entry name" value="GapR-like"/>
</dbReference>
<dbReference type="InterPro" id="IPR046367">
    <property type="entry name" value="GapR-like_DNA-bd"/>
</dbReference>
<dbReference type="NCBIfam" id="NF010247">
    <property type="entry name" value="PRK13694.1"/>
    <property type="match status" value="1"/>
</dbReference>
<dbReference type="Pfam" id="PF10073">
    <property type="entry name" value="GapR_DNA-bd"/>
    <property type="match status" value="1"/>
</dbReference>
<protein>
    <recommendedName>
        <fullName evidence="1">UPF0335 protein Meso_3367</fullName>
    </recommendedName>
</protein>
<proteinExistence type="inferred from homology"/>
<feature type="chain" id="PRO_1000046960" description="UPF0335 protein Meso_3367">
    <location>
        <begin position="1"/>
        <end position="87"/>
    </location>
</feature>
<accession>Q11CY7</accession>
<evidence type="ECO:0000255" key="1">
    <source>
        <dbReference type="HAMAP-Rule" id="MF_00797"/>
    </source>
</evidence>
<organism>
    <name type="scientific">Chelativorans sp. (strain BNC1)</name>
    <dbReference type="NCBI Taxonomy" id="266779"/>
    <lineage>
        <taxon>Bacteria</taxon>
        <taxon>Pseudomonadati</taxon>
        <taxon>Pseudomonadota</taxon>
        <taxon>Alphaproteobacteria</taxon>
        <taxon>Hyphomicrobiales</taxon>
        <taxon>Phyllobacteriaceae</taxon>
        <taxon>Chelativorans</taxon>
    </lineage>
</organism>